<protein>
    <recommendedName>
        <fullName evidence="6">Dermonecrotic toxin LhSicTox-alphaIA1iii</fullName>
        <ecNumber evidence="4">4.6.1.-</ecNumber>
    </recommendedName>
    <alternativeName>
        <fullName>Phospholipase D</fullName>
        <shortName>PLD</shortName>
    </alternativeName>
    <alternativeName>
        <fullName>Sphingomyelin phosphodiesterase D</fullName>
        <shortName>SMD</shortName>
        <shortName>SMase D</shortName>
        <shortName>Sphingomyelinase D</shortName>
    </alternativeName>
</protein>
<organism>
    <name type="scientific">Loxosceles hirsuta</name>
    <name type="common">Recluse spider</name>
    <dbReference type="NCBI Taxonomy" id="571525"/>
    <lineage>
        <taxon>Eukaryota</taxon>
        <taxon>Metazoa</taxon>
        <taxon>Ecdysozoa</taxon>
        <taxon>Arthropoda</taxon>
        <taxon>Chelicerata</taxon>
        <taxon>Arachnida</taxon>
        <taxon>Araneae</taxon>
        <taxon>Araneomorphae</taxon>
        <taxon>Haplogynae</taxon>
        <taxon>Scytodoidea</taxon>
        <taxon>Sicariidae</taxon>
        <taxon>Loxosceles</taxon>
    </lineage>
</organism>
<sequence>WIMGHMVNAIGQIDEFVNLGANSIETDVSFDSSANPEYTYHGIPCDCGRNCKKWENFNDFLKGLRSATTPGNSKYKEKLVLVVFDLKTGSLYDNQANDAGKKLAKNLLQHYWNNGNNGGRAYIVLSIPDLNHYPLIKGFTDTLKQEGHPELLDKLGYDFSGNDAIGDVAKAYKKAGVSGHVWQSDGITNCLLRGLTRVKEAVANRDSGNGYINKVYYWTVDKRATTRDALDAGVDGIMTNYPDVITDVLNEAAYKSKFRVATYEDNPWETFKK</sequence>
<feature type="chain" id="PRO_0000392736" description="Dermonecrotic toxin LhSicTox-alphaIA1iii">
    <location>
        <begin position="1" status="less than"/>
        <end position="273"/>
    </location>
</feature>
<feature type="active site" evidence="5">
    <location>
        <position position="5"/>
    </location>
</feature>
<feature type="active site" description="Nucleophile" evidence="5">
    <location>
        <position position="41"/>
    </location>
</feature>
<feature type="binding site" evidence="5">
    <location>
        <position position="25"/>
    </location>
    <ligand>
        <name>Mg(2+)</name>
        <dbReference type="ChEBI" id="CHEBI:18420"/>
    </ligand>
</feature>
<feature type="binding site" evidence="5">
    <location>
        <position position="27"/>
    </location>
    <ligand>
        <name>Mg(2+)</name>
        <dbReference type="ChEBI" id="CHEBI:18420"/>
    </ligand>
</feature>
<feature type="binding site" evidence="5">
    <location>
        <position position="85"/>
    </location>
    <ligand>
        <name>Mg(2+)</name>
        <dbReference type="ChEBI" id="CHEBI:18420"/>
    </ligand>
</feature>
<feature type="disulfide bond" evidence="3">
    <location>
        <begin position="45"/>
        <end position="51"/>
    </location>
</feature>
<feature type="disulfide bond" evidence="3">
    <location>
        <begin position="47"/>
        <end position="190"/>
    </location>
</feature>
<feature type="non-terminal residue">
    <location>
        <position position="1"/>
    </location>
</feature>
<name>A1H3_LOXHI</name>
<reference key="1">
    <citation type="journal article" date="2009" name="Mol. Biol. Evol.">
        <title>Molecular evolution, functional variation, and proposed nomenclature of the gene family that includes sphingomyelinase D in sicariid spider venoms.</title>
        <authorList>
            <person name="Binford G.J."/>
            <person name="Bodner M.R."/>
            <person name="Cordes M.H."/>
            <person name="Baldwin K.L."/>
            <person name="Rynerson M.R."/>
            <person name="Burns S.N."/>
            <person name="Zobel-Thropp P.A."/>
        </authorList>
    </citation>
    <scope>NUCLEOTIDE SEQUENCE [MRNA]</scope>
    <scope>NOMENCLATURE</scope>
    <source>
        <tissue>Venom gland</tissue>
    </source>
</reference>
<accession>C0JAT6</accession>
<dbReference type="EC" id="4.6.1.-" evidence="4"/>
<dbReference type="EMBL" id="FJ171371">
    <property type="protein sequence ID" value="ACN48867.1"/>
    <property type="molecule type" value="mRNA"/>
</dbReference>
<dbReference type="EMBL" id="FJ171372">
    <property type="protein sequence ID" value="ACN48868.1"/>
    <property type="molecule type" value="mRNA"/>
</dbReference>
<dbReference type="SMR" id="C0JAT6"/>
<dbReference type="GO" id="GO:0005576">
    <property type="term" value="C:extracellular region"/>
    <property type="evidence" value="ECO:0007669"/>
    <property type="project" value="UniProtKB-SubCell"/>
</dbReference>
<dbReference type="GO" id="GO:0016829">
    <property type="term" value="F:lyase activity"/>
    <property type="evidence" value="ECO:0007669"/>
    <property type="project" value="UniProtKB-KW"/>
</dbReference>
<dbReference type="GO" id="GO:0046872">
    <property type="term" value="F:metal ion binding"/>
    <property type="evidence" value="ECO:0007669"/>
    <property type="project" value="UniProtKB-KW"/>
</dbReference>
<dbReference type="GO" id="GO:0008081">
    <property type="term" value="F:phosphoric diester hydrolase activity"/>
    <property type="evidence" value="ECO:0007669"/>
    <property type="project" value="InterPro"/>
</dbReference>
<dbReference type="GO" id="GO:0090729">
    <property type="term" value="F:toxin activity"/>
    <property type="evidence" value="ECO:0007669"/>
    <property type="project" value="UniProtKB-KW"/>
</dbReference>
<dbReference type="GO" id="GO:0031640">
    <property type="term" value="P:killing of cells of another organism"/>
    <property type="evidence" value="ECO:0007669"/>
    <property type="project" value="UniProtKB-KW"/>
</dbReference>
<dbReference type="GO" id="GO:0016042">
    <property type="term" value="P:lipid catabolic process"/>
    <property type="evidence" value="ECO:0007669"/>
    <property type="project" value="UniProtKB-KW"/>
</dbReference>
<dbReference type="CDD" id="cd08576">
    <property type="entry name" value="GDPD_like_SMaseD_PLD"/>
    <property type="match status" value="1"/>
</dbReference>
<dbReference type="Gene3D" id="3.20.20.190">
    <property type="entry name" value="Phosphatidylinositol (PI) phosphodiesterase"/>
    <property type="match status" value="1"/>
</dbReference>
<dbReference type="InterPro" id="IPR017946">
    <property type="entry name" value="PLC-like_Pdiesterase_TIM-brl"/>
</dbReference>
<dbReference type="Pfam" id="PF13653">
    <property type="entry name" value="GDPD_2"/>
    <property type="match status" value="1"/>
</dbReference>
<dbReference type="SUPFAM" id="SSF51695">
    <property type="entry name" value="PLC-like phosphodiesterases"/>
    <property type="match status" value="1"/>
</dbReference>
<evidence type="ECO:0000250" key="1">
    <source>
        <dbReference type="UniProtKB" id="A0A0D4WTV1"/>
    </source>
</evidence>
<evidence type="ECO:0000250" key="2">
    <source>
        <dbReference type="UniProtKB" id="A0A0D4WV12"/>
    </source>
</evidence>
<evidence type="ECO:0000250" key="3">
    <source>
        <dbReference type="UniProtKB" id="P0CE80"/>
    </source>
</evidence>
<evidence type="ECO:0000250" key="4">
    <source>
        <dbReference type="UniProtKB" id="Q4ZFU2"/>
    </source>
</evidence>
<evidence type="ECO:0000250" key="5">
    <source>
        <dbReference type="UniProtKB" id="Q8I914"/>
    </source>
</evidence>
<evidence type="ECO:0000303" key="6">
    <source>
    </source>
</evidence>
<evidence type="ECO:0000305" key="7"/>
<evidence type="ECO:0000305" key="8">
    <source>
    </source>
</evidence>
<proteinExistence type="evidence at transcript level"/>
<comment type="function">
    <text evidence="1 3">Dermonecrotic toxins cleave the phosphodiester linkage between the phosphate and headgroup of certain phospholipids (sphingolipid and lysolipid substrates), forming an alcohol (often choline) and a cyclic phosphate (By similarity). This toxin acts on sphingomyelin (SM) (By similarity). It may also act on ceramide phosphoethanolamine (CPE), lysophosphatidylcholine (LPC) and lysophosphatidylethanolamine (LPE), but not on lysophosphatidylserine (LPS), and lysophosphatidylglycerol (LPG) (By similarity). It acts by transphosphatidylation, releasing exclusively cyclic phosphate products as second products (By similarity). Induces dermonecrosis, hemolysis, increased vascular permeability, edema, inflammatory response, and platelet aggregation (By similarity).</text>
</comment>
<comment type="catalytic activity">
    <reaction evidence="1">
        <text>an N-(acyl)-sphingosylphosphocholine = an N-(acyl)-sphingosyl-1,3-cyclic phosphate + choline</text>
        <dbReference type="Rhea" id="RHEA:60652"/>
        <dbReference type="ChEBI" id="CHEBI:15354"/>
        <dbReference type="ChEBI" id="CHEBI:64583"/>
        <dbReference type="ChEBI" id="CHEBI:143892"/>
    </reaction>
</comment>
<comment type="catalytic activity">
    <reaction evidence="1">
        <text>an N-(acyl)-sphingosylphosphoethanolamine = an N-(acyl)-sphingosyl-1,3-cyclic phosphate + ethanolamine</text>
        <dbReference type="Rhea" id="RHEA:60648"/>
        <dbReference type="ChEBI" id="CHEBI:57603"/>
        <dbReference type="ChEBI" id="CHEBI:143891"/>
        <dbReference type="ChEBI" id="CHEBI:143892"/>
    </reaction>
</comment>
<comment type="catalytic activity">
    <reaction evidence="1">
        <text>a 1-acyl-sn-glycero-3-phosphocholine = a 1-acyl-sn-glycero-2,3-cyclic phosphate + choline</text>
        <dbReference type="Rhea" id="RHEA:60700"/>
        <dbReference type="ChEBI" id="CHEBI:15354"/>
        <dbReference type="ChEBI" id="CHEBI:58168"/>
        <dbReference type="ChEBI" id="CHEBI:143947"/>
    </reaction>
</comment>
<comment type="catalytic activity">
    <reaction evidence="1">
        <text>a 1-acyl-sn-glycero-3-phosphoethanolamine = a 1-acyl-sn-glycero-2,3-cyclic phosphate + ethanolamine</text>
        <dbReference type="Rhea" id="RHEA:60704"/>
        <dbReference type="ChEBI" id="CHEBI:57603"/>
        <dbReference type="ChEBI" id="CHEBI:64381"/>
        <dbReference type="ChEBI" id="CHEBI:143947"/>
    </reaction>
</comment>
<comment type="cofactor">
    <cofactor evidence="5">
        <name>Mg(2+)</name>
        <dbReference type="ChEBI" id="CHEBI:18420"/>
    </cofactor>
    <text evidence="5">Binds 1 Mg(2+) ion per subunit.</text>
</comment>
<comment type="subcellular location">
    <subcellularLocation>
        <location evidence="8">Secreted</location>
    </subcellularLocation>
</comment>
<comment type="tissue specificity">
    <text evidence="8">Expressed by the venom gland.</text>
</comment>
<comment type="similarity">
    <text evidence="7">Belongs to the arthropod phospholipase D family. Class II subfamily.</text>
</comment>
<comment type="caution">
    <text evidence="1 2 4">The most common activity assay for dermonecrotic toxins detects enzymatic activity by monitoring choline release from substrate. Liberation of choline from sphingomyelin (SM) or lysophosphatidylcholine (LPC) is commonly assumed to result from substrate hydrolysis, giving either ceramide-1-phosphate (C1P) or lysophosphatidic acid (LPA), respectively, as a second product. However, two studies from Lajoie and colleagues (2013 and 2015) report the observation of exclusive formation of cyclic phosphate products as second products, resulting from intramolecular transphosphatidylation. Cyclic phosphates have vastly different biological properties from their monoester counterparts, and they may be relevant to the pathology of brown spider envenomation.</text>
</comment>
<keyword id="KW-0204">Cytolysis</keyword>
<keyword id="KW-1061">Dermonecrotic toxin</keyword>
<keyword id="KW-1015">Disulfide bond</keyword>
<keyword id="KW-0354">Hemolysis</keyword>
<keyword id="KW-0442">Lipid degradation</keyword>
<keyword id="KW-0443">Lipid metabolism</keyword>
<keyword id="KW-0456">Lyase</keyword>
<keyword id="KW-0460">Magnesium</keyword>
<keyword id="KW-0479">Metal-binding</keyword>
<keyword id="KW-0964">Secreted</keyword>
<keyword id="KW-0800">Toxin</keyword>